<accession>P18922</accession>
<protein>
    <recommendedName>
        <fullName>Uncharacterized 5.1 kDa protein in Gp52-ac intergenic region</fullName>
    </recommendedName>
</protein>
<feature type="chain" id="PRO_0000165206" description="Uncharacterized 5.1 kDa protein in Gp52-ac intergenic region">
    <location>
        <begin position="1"/>
        <end position="46"/>
    </location>
</feature>
<gene>
    <name type="primary">y16J</name>
    <name type="synonym">52.1</name>
</gene>
<name>Y16J_BPT4</name>
<dbReference type="EMBL" id="AF158101">
    <property type="protein sequence ID" value="AAD42526.1"/>
    <property type="molecule type" value="Genomic_DNA"/>
</dbReference>
<dbReference type="PIR" id="S01871">
    <property type="entry name" value="ACBPT4"/>
</dbReference>
<dbReference type="RefSeq" id="NP_049876.1">
    <property type="nucleotide sequence ID" value="NC_000866.4"/>
</dbReference>
<dbReference type="SMR" id="P18922"/>
<dbReference type="GeneID" id="1258635"/>
<dbReference type="KEGG" id="vg:1258635"/>
<dbReference type="Proteomes" id="UP000009087">
    <property type="component" value="Segment"/>
</dbReference>
<dbReference type="InterPro" id="IPR055820">
    <property type="entry name" value="DUF7396"/>
</dbReference>
<dbReference type="Pfam" id="PF24129">
    <property type="entry name" value="DUF7396"/>
    <property type="match status" value="1"/>
</dbReference>
<organismHost>
    <name type="scientific">Escherichia coli</name>
    <dbReference type="NCBI Taxonomy" id="562"/>
</organismHost>
<organism>
    <name type="scientific">Enterobacteria phage T4</name>
    <name type="common">Bacteriophage T4</name>
    <dbReference type="NCBI Taxonomy" id="10665"/>
    <lineage>
        <taxon>Viruses</taxon>
        <taxon>Duplodnaviria</taxon>
        <taxon>Heunggongvirae</taxon>
        <taxon>Uroviricota</taxon>
        <taxon>Caudoviricetes</taxon>
        <taxon>Straboviridae</taxon>
        <taxon>Tevenvirinae</taxon>
        <taxon>Tequatrovirus</taxon>
    </lineage>
</organism>
<sequence>MIKKILGYSLALAALLVALYYGVMFGLIQVVLFISDVIMALHSLVW</sequence>
<proteinExistence type="predicted"/>
<keyword id="KW-1185">Reference proteome</keyword>
<reference key="1">
    <citation type="journal article" date="1988" name="J. Mol. Biol.">
        <title>Nucleotide and deduced amino acid sequence of stp: the bacteriophage T4 anticodon nuclease gene.</title>
        <authorList>
            <person name="Chapman D."/>
            <person name="Morad I."/>
            <person name="Kaufmann G."/>
            <person name="Gait M.J."/>
            <person name="Jorissen L."/>
            <person name="Snyder L."/>
        </authorList>
    </citation>
    <scope>NUCLEOTIDE SEQUENCE [GENOMIC DNA]</scope>
</reference>
<reference key="2">
    <citation type="journal article" date="2003" name="Microbiol. Mol. Biol. Rev.">
        <title>Bacteriophage T4 genome.</title>
        <authorList>
            <person name="Miller E.S."/>
            <person name="Kutter E."/>
            <person name="Mosig G."/>
            <person name="Arisaka F."/>
            <person name="Kunisawa T."/>
            <person name="Ruger W."/>
        </authorList>
    </citation>
    <scope>NUCLEOTIDE SEQUENCE [LARGE SCALE GENOMIC DNA]</scope>
</reference>